<feature type="chain" id="PRO_0000226084" description="ABC transporter C family member 12">
    <location>
        <begin position="1"/>
        <end position="1495"/>
    </location>
</feature>
<feature type="transmembrane region" description="Helical" evidence="3">
    <location>
        <begin position="38"/>
        <end position="58"/>
    </location>
</feature>
<feature type="transmembrane region" description="Helical" evidence="3">
    <location>
        <begin position="76"/>
        <end position="96"/>
    </location>
</feature>
<feature type="transmembrane region" description="Helical" evidence="3">
    <location>
        <begin position="110"/>
        <end position="130"/>
    </location>
</feature>
<feature type="transmembrane region" description="Helical" evidence="3">
    <location>
        <begin position="146"/>
        <end position="166"/>
    </location>
</feature>
<feature type="transmembrane region" description="Helical" evidence="3">
    <location>
        <begin position="173"/>
        <end position="195"/>
    </location>
</feature>
<feature type="transmembrane region" description="Helical" evidence="3">
    <location>
        <begin position="303"/>
        <end position="323"/>
    </location>
</feature>
<feature type="transmembrane region" description="Helical" evidence="3">
    <location>
        <begin position="337"/>
        <end position="357"/>
    </location>
</feature>
<feature type="transmembrane region" description="Helical" evidence="3">
    <location>
        <begin position="420"/>
        <end position="440"/>
    </location>
</feature>
<feature type="transmembrane region" description="Helical" evidence="3">
    <location>
        <begin position="441"/>
        <end position="461"/>
    </location>
</feature>
<feature type="transmembrane region" description="Helical" evidence="3">
    <location>
        <begin position="528"/>
        <end position="548"/>
    </location>
</feature>
<feature type="transmembrane region" description="Helical" evidence="3">
    <location>
        <begin position="558"/>
        <end position="578"/>
    </location>
</feature>
<feature type="transmembrane region" description="Helical" evidence="3">
    <location>
        <begin position="907"/>
        <end position="927"/>
    </location>
</feature>
<feature type="transmembrane region" description="Helical" evidence="3">
    <location>
        <begin position="949"/>
        <end position="969"/>
    </location>
</feature>
<feature type="transmembrane region" description="Helical" evidence="3">
    <location>
        <begin position="1042"/>
        <end position="1062"/>
    </location>
</feature>
<feature type="transmembrane region" description="Helical" evidence="3">
    <location>
        <begin position="1140"/>
        <end position="1160"/>
    </location>
</feature>
<feature type="transmembrane region" description="Helical" evidence="3">
    <location>
        <begin position="1166"/>
        <end position="1186"/>
    </location>
</feature>
<feature type="domain" description="ABC transmembrane type-1 1" evidence="3">
    <location>
        <begin position="303"/>
        <end position="583"/>
    </location>
</feature>
<feature type="domain" description="ABC transporter 1" evidence="2">
    <location>
        <begin position="615"/>
        <end position="839"/>
    </location>
</feature>
<feature type="domain" description="ABC transmembrane type-1 2" evidence="3">
    <location>
        <begin position="914"/>
        <end position="1198"/>
    </location>
</feature>
<feature type="domain" description="ABC transporter 2" evidence="2">
    <location>
        <begin position="1235"/>
        <end position="1469"/>
    </location>
</feature>
<feature type="binding site" evidence="2">
    <location>
        <begin position="650"/>
        <end position="657"/>
    </location>
    <ligand>
        <name>ATP</name>
        <dbReference type="ChEBI" id="CHEBI:30616"/>
        <label>1</label>
    </ligand>
</feature>
<feature type="binding site" evidence="2">
    <location>
        <begin position="1269"/>
        <end position="1276"/>
    </location>
    <ligand>
        <name>ATP</name>
        <dbReference type="ChEBI" id="CHEBI:30616"/>
        <label>2</label>
    </ligand>
</feature>
<comment type="function">
    <text evidence="1">Pump for glutathione S-conjugates.</text>
</comment>
<comment type="catalytic activity">
    <reaction>
        <text>ATP + H2O + xenobioticSide 1 = ADP + phosphate + xenobioticSide 2.</text>
        <dbReference type="EC" id="7.6.2.2"/>
    </reaction>
</comment>
<comment type="subcellular location">
    <subcellularLocation>
        <location evidence="3">Membrane</location>
        <topology evidence="3">Multi-pass membrane protein</topology>
    </subcellularLocation>
</comment>
<comment type="tissue specificity">
    <text evidence="4">Ubiquitous.</text>
</comment>
<comment type="similarity">
    <text evidence="5">Belongs to the ABC transporter superfamily. ABCC family. Conjugate transporter (TC 3.A.1.208) subfamily.</text>
</comment>
<dbReference type="EC" id="7.6.2.2"/>
<dbReference type="EMBL" id="AC025295">
    <property type="protein sequence ID" value="AAG51100.1"/>
    <property type="molecule type" value="Genomic_DNA"/>
</dbReference>
<dbReference type="EMBL" id="CP002684">
    <property type="protein sequence ID" value="ANM60872.1"/>
    <property type="molecule type" value="Genomic_DNA"/>
</dbReference>
<dbReference type="EMBL" id="CP002684">
    <property type="protein sequence ID" value="ANM60873.1"/>
    <property type="molecule type" value="Genomic_DNA"/>
</dbReference>
<dbReference type="EMBL" id="CP002684">
    <property type="protein sequence ID" value="ANM60875.1"/>
    <property type="molecule type" value="Genomic_DNA"/>
</dbReference>
<dbReference type="PIR" id="E86428">
    <property type="entry name" value="E86428"/>
</dbReference>
<dbReference type="RefSeq" id="NP_001323123.1">
    <property type="nucleotide sequence ID" value="NM_001332893.1"/>
</dbReference>
<dbReference type="RefSeq" id="NP_001323124.1">
    <property type="nucleotide sequence ID" value="NM_001332895.1"/>
</dbReference>
<dbReference type="RefSeq" id="NP_001323126.1">
    <property type="nucleotide sequence ID" value="NM_001332897.1"/>
</dbReference>
<dbReference type="SMR" id="Q9C8H0"/>
<dbReference type="FunCoup" id="Q9C8H0">
    <property type="interactions" value="1708"/>
</dbReference>
<dbReference type="STRING" id="3702.Q9C8H0"/>
<dbReference type="TCDB" id="3.A.1.208.43">
    <property type="family name" value="the atp-binding cassette (abc) superfamily"/>
</dbReference>
<dbReference type="PaxDb" id="3702-AT1G30410.1"/>
<dbReference type="ProteomicsDB" id="245098"/>
<dbReference type="EnsemblPlants" id="AT1G30410.2">
    <property type="protein sequence ID" value="AT1G30410.2"/>
    <property type="gene ID" value="AT1G30410"/>
</dbReference>
<dbReference type="EnsemblPlants" id="AT1G30410.4">
    <property type="protein sequence ID" value="AT1G30410.4"/>
    <property type="gene ID" value="AT1G30410"/>
</dbReference>
<dbReference type="EnsemblPlants" id="AT1G30410.6">
    <property type="protein sequence ID" value="AT1G30410.6"/>
    <property type="gene ID" value="AT1G30410"/>
</dbReference>
<dbReference type="GeneID" id="839921"/>
<dbReference type="Gramene" id="AT1G30410.2">
    <property type="protein sequence ID" value="AT1G30410.2"/>
    <property type="gene ID" value="AT1G30410"/>
</dbReference>
<dbReference type="Gramene" id="AT1G30410.4">
    <property type="protein sequence ID" value="AT1G30410.4"/>
    <property type="gene ID" value="AT1G30410"/>
</dbReference>
<dbReference type="Gramene" id="AT1G30410.6">
    <property type="protein sequence ID" value="AT1G30410.6"/>
    <property type="gene ID" value="AT1G30410"/>
</dbReference>
<dbReference type="KEGG" id="ath:AT1G30410"/>
<dbReference type="Araport" id="AT1G30410"/>
<dbReference type="TAIR" id="AT1G30410">
    <property type="gene designation" value="ABCC12"/>
</dbReference>
<dbReference type="eggNOG" id="KOG0054">
    <property type="taxonomic scope" value="Eukaryota"/>
</dbReference>
<dbReference type="HOGENOM" id="CLU_000604_27_3_1"/>
<dbReference type="InParanoid" id="Q9C8H0"/>
<dbReference type="PhylomeDB" id="Q9C8H0"/>
<dbReference type="BioCyc" id="ARA:AT1G30410-MONOMER"/>
<dbReference type="PRO" id="PR:Q9C8H0"/>
<dbReference type="Proteomes" id="UP000006548">
    <property type="component" value="Chromosome 1"/>
</dbReference>
<dbReference type="ExpressionAtlas" id="Q9C8H0">
    <property type="expression patterns" value="baseline and differential"/>
</dbReference>
<dbReference type="GO" id="GO:0016020">
    <property type="term" value="C:membrane"/>
    <property type="evidence" value="ECO:0007669"/>
    <property type="project" value="UniProtKB-SubCell"/>
</dbReference>
<dbReference type="GO" id="GO:0008559">
    <property type="term" value="F:ABC-type xenobiotic transporter activity"/>
    <property type="evidence" value="ECO:0007669"/>
    <property type="project" value="UniProtKB-EC"/>
</dbReference>
<dbReference type="GO" id="GO:0005524">
    <property type="term" value="F:ATP binding"/>
    <property type="evidence" value="ECO:0007669"/>
    <property type="project" value="UniProtKB-KW"/>
</dbReference>
<dbReference type="GO" id="GO:0016887">
    <property type="term" value="F:ATP hydrolysis activity"/>
    <property type="evidence" value="ECO:0007669"/>
    <property type="project" value="InterPro"/>
</dbReference>
<dbReference type="CDD" id="cd18579">
    <property type="entry name" value="ABC_6TM_ABCC_D1"/>
    <property type="match status" value="1"/>
</dbReference>
<dbReference type="CDD" id="cd18580">
    <property type="entry name" value="ABC_6TM_ABCC_D2"/>
    <property type="match status" value="1"/>
</dbReference>
<dbReference type="CDD" id="cd03250">
    <property type="entry name" value="ABCC_MRP_domain1"/>
    <property type="match status" value="1"/>
</dbReference>
<dbReference type="CDD" id="cd03244">
    <property type="entry name" value="ABCC_MRP_domain2"/>
    <property type="match status" value="1"/>
</dbReference>
<dbReference type="FunFam" id="1.20.1560.10:FF:000013">
    <property type="entry name" value="ABC transporter C family member 2"/>
    <property type="match status" value="1"/>
</dbReference>
<dbReference type="FunFam" id="1.20.1560.10:FF:000024">
    <property type="entry name" value="ABC transporter C family member 2"/>
    <property type="match status" value="1"/>
</dbReference>
<dbReference type="FunFam" id="3.40.50.300:FF:000450">
    <property type="entry name" value="ABC transporter C family member 2"/>
    <property type="match status" value="1"/>
</dbReference>
<dbReference type="FunFam" id="3.40.50.300:FF:000163">
    <property type="entry name" value="Multidrug resistance-associated protein member 4"/>
    <property type="match status" value="1"/>
</dbReference>
<dbReference type="Gene3D" id="1.20.1560.10">
    <property type="entry name" value="ABC transporter type 1, transmembrane domain"/>
    <property type="match status" value="2"/>
</dbReference>
<dbReference type="Gene3D" id="3.40.50.300">
    <property type="entry name" value="P-loop containing nucleotide triphosphate hydrolases"/>
    <property type="match status" value="2"/>
</dbReference>
<dbReference type="InterPro" id="IPR003593">
    <property type="entry name" value="AAA+_ATPase"/>
</dbReference>
<dbReference type="InterPro" id="IPR011527">
    <property type="entry name" value="ABC1_TM_dom"/>
</dbReference>
<dbReference type="InterPro" id="IPR036640">
    <property type="entry name" value="ABC1_TM_sf"/>
</dbReference>
<dbReference type="InterPro" id="IPR003439">
    <property type="entry name" value="ABC_transporter-like_ATP-bd"/>
</dbReference>
<dbReference type="InterPro" id="IPR017871">
    <property type="entry name" value="ABC_transporter-like_CS"/>
</dbReference>
<dbReference type="InterPro" id="IPR050173">
    <property type="entry name" value="ABC_transporter_C-like"/>
</dbReference>
<dbReference type="InterPro" id="IPR044746">
    <property type="entry name" value="ABCC_6TM_D1"/>
</dbReference>
<dbReference type="InterPro" id="IPR044726">
    <property type="entry name" value="ABCC_6TM_D2"/>
</dbReference>
<dbReference type="InterPro" id="IPR027417">
    <property type="entry name" value="P-loop_NTPase"/>
</dbReference>
<dbReference type="PANTHER" id="PTHR24223:SF375">
    <property type="entry name" value="ABC TRANSPORTER C FAMILY MEMBER 11-RELATED"/>
    <property type="match status" value="1"/>
</dbReference>
<dbReference type="PANTHER" id="PTHR24223">
    <property type="entry name" value="ATP-BINDING CASSETTE SUB-FAMILY C"/>
    <property type="match status" value="1"/>
</dbReference>
<dbReference type="Pfam" id="PF00664">
    <property type="entry name" value="ABC_membrane"/>
    <property type="match status" value="2"/>
</dbReference>
<dbReference type="Pfam" id="PF00005">
    <property type="entry name" value="ABC_tran"/>
    <property type="match status" value="2"/>
</dbReference>
<dbReference type="SMART" id="SM00382">
    <property type="entry name" value="AAA"/>
    <property type="match status" value="2"/>
</dbReference>
<dbReference type="SUPFAM" id="SSF90123">
    <property type="entry name" value="ABC transporter transmembrane region"/>
    <property type="match status" value="2"/>
</dbReference>
<dbReference type="SUPFAM" id="SSF52540">
    <property type="entry name" value="P-loop containing nucleoside triphosphate hydrolases"/>
    <property type="match status" value="2"/>
</dbReference>
<dbReference type="PROSITE" id="PS50929">
    <property type="entry name" value="ABC_TM1F"/>
    <property type="match status" value="2"/>
</dbReference>
<dbReference type="PROSITE" id="PS00211">
    <property type="entry name" value="ABC_TRANSPORTER_1"/>
    <property type="match status" value="2"/>
</dbReference>
<dbReference type="PROSITE" id="PS50893">
    <property type="entry name" value="ABC_TRANSPORTER_2"/>
    <property type="match status" value="2"/>
</dbReference>
<reference key="1">
    <citation type="journal article" date="2000" name="Nature">
        <title>Sequence and analysis of chromosome 1 of the plant Arabidopsis thaliana.</title>
        <authorList>
            <person name="Theologis A."/>
            <person name="Ecker J.R."/>
            <person name="Palm C.J."/>
            <person name="Federspiel N.A."/>
            <person name="Kaul S."/>
            <person name="White O."/>
            <person name="Alonso J."/>
            <person name="Altafi H."/>
            <person name="Araujo R."/>
            <person name="Bowman C.L."/>
            <person name="Brooks S.Y."/>
            <person name="Buehler E."/>
            <person name="Chan A."/>
            <person name="Chao Q."/>
            <person name="Chen H."/>
            <person name="Cheuk R.F."/>
            <person name="Chin C.W."/>
            <person name="Chung M.K."/>
            <person name="Conn L."/>
            <person name="Conway A.B."/>
            <person name="Conway A.R."/>
            <person name="Creasy T.H."/>
            <person name="Dewar K."/>
            <person name="Dunn P."/>
            <person name="Etgu P."/>
            <person name="Feldblyum T.V."/>
            <person name="Feng J.-D."/>
            <person name="Fong B."/>
            <person name="Fujii C.Y."/>
            <person name="Gill J.E."/>
            <person name="Goldsmith A.D."/>
            <person name="Haas B."/>
            <person name="Hansen N.F."/>
            <person name="Hughes B."/>
            <person name="Huizar L."/>
            <person name="Hunter J.L."/>
            <person name="Jenkins J."/>
            <person name="Johnson-Hopson C."/>
            <person name="Khan S."/>
            <person name="Khaykin E."/>
            <person name="Kim C.J."/>
            <person name="Koo H.L."/>
            <person name="Kremenetskaia I."/>
            <person name="Kurtz D.B."/>
            <person name="Kwan A."/>
            <person name="Lam B."/>
            <person name="Langin-Hooper S."/>
            <person name="Lee A."/>
            <person name="Lee J.M."/>
            <person name="Lenz C.A."/>
            <person name="Li J.H."/>
            <person name="Li Y.-P."/>
            <person name="Lin X."/>
            <person name="Liu S.X."/>
            <person name="Liu Z.A."/>
            <person name="Luros J.S."/>
            <person name="Maiti R."/>
            <person name="Marziali A."/>
            <person name="Militscher J."/>
            <person name="Miranda M."/>
            <person name="Nguyen M."/>
            <person name="Nierman W.C."/>
            <person name="Osborne B.I."/>
            <person name="Pai G."/>
            <person name="Peterson J."/>
            <person name="Pham P.K."/>
            <person name="Rizzo M."/>
            <person name="Rooney T."/>
            <person name="Rowley D."/>
            <person name="Sakano H."/>
            <person name="Salzberg S.L."/>
            <person name="Schwartz J.R."/>
            <person name="Shinn P."/>
            <person name="Southwick A.M."/>
            <person name="Sun H."/>
            <person name="Tallon L.J."/>
            <person name="Tambunga G."/>
            <person name="Toriumi M.J."/>
            <person name="Town C.D."/>
            <person name="Utterback T."/>
            <person name="Van Aken S."/>
            <person name="Vaysberg M."/>
            <person name="Vysotskaia V.S."/>
            <person name="Walker M."/>
            <person name="Wu D."/>
            <person name="Yu G."/>
            <person name="Fraser C.M."/>
            <person name="Venter J.C."/>
            <person name="Davis R.W."/>
        </authorList>
    </citation>
    <scope>NUCLEOTIDE SEQUENCE [LARGE SCALE GENOMIC DNA]</scope>
    <source>
        <strain>cv. Columbia</strain>
    </source>
</reference>
<reference key="2">
    <citation type="journal article" date="2017" name="Plant J.">
        <title>Araport11: a complete reannotation of the Arabidopsis thaliana reference genome.</title>
        <authorList>
            <person name="Cheng C.Y."/>
            <person name="Krishnakumar V."/>
            <person name="Chan A.P."/>
            <person name="Thibaud-Nissen F."/>
            <person name="Schobel S."/>
            <person name="Town C.D."/>
        </authorList>
    </citation>
    <scope>GENOME REANNOTATION</scope>
    <source>
        <strain>cv. Columbia</strain>
    </source>
</reference>
<reference key="3">
    <citation type="journal article" date="2001" name="J. Biol. Chem.">
        <title>The Arabidopsis thaliana ABC protein superfamily, a complete inventory.</title>
        <authorList>
            <person name="Sanchez-Fernandez R."/>
            <person name="Davies T.G."/>
            <person name="Coleman J.O."/>
            <person name="Rea P.A."/>
        </authorList>
    </citation>
    <scope>GENE FAMILY</scope>
    <scope>NOMENCLATURE</scope>
</reference>
<reference key="4">
    <citation type="journal article" date="2002" name="Planta">
        <title>Multifunctionality of plant ABC transporters -- more than just detoxifiers.</title>
        <authorList>
            <person name="Martinoia E."/>
            <person name="Klein M."/>
            <person name="Geisler M."/>
            <person name="Bovet L."/>
            <person name="Forestier C."/>
            <person name="Kolukisaoglu H.U."/>
            <person name="Mueller-Roeber B."/>
            <person name="Schulz B."/>
        </authorList>
    </citation>
    <scope>GENE FAMILY</scope>
</reference>
<reference key="5">
    <citation type="journal article" date="2002" name="Planta">
        <title>Family business: the multidrug-resistance related protein (MRP) ABC transporter genes in Arabidopsis thaliana.</title>
        <authorList>
            <person name="Kolukisaoglu U.H."/>
            <person name="Bovet L."/>
            <person name="Klein M."/>
            <person name="Eggmann T."/>
            <person name="Geisler M."/>
            <person name="Wanke D."/>
            <person name="Martinoia E."/>
            <person name="Schulz B."/>
        </authorList>
    </citation>
    <scope>TISSUE SPECIFICITY</scope>
</reference>
<reference key="6">
    <citation type="journal article" date="2008" name="Trends Plant Sci.">
        <title>Plant ABC proteins - a unified nomenclature and updated inventory.</title>
        <authorList>
            <person name="Verrier P.J."/>
            <person name="Bird D."/>
            <person name="Burla B."/>
            <person name="Dassa E."/>
            <person name="Forestier C."/>
            <person name="Geisler M."/>
            <person name="Klein M."/>
            <person name="Kolukisaoglu H.U."/>
            <person name="Lee Y."/>
            <person name="Martinoia E."/>
            <person name="Murphy A."/>
            <person name="Rea P.A."/>
            <person name="Samuels L."/>
            <person name="Schulz B."/>
            <person name="Spalding E.J."/>
            <person name="Yazaki K."/>
            <person name="Theodoulou F.L."/>
        </authorList>
    </citation>
    <scope>GENE FAMILY</scope>
    <scope>NOMENCLATURE</scope>
</reference>
<accession>Q9C8H0</accession>
<accession>F4I4U8</accession>
<protein>
    <recommendedName>
        <fullName>ABC transporter C family member 12</fullName>
        <shortName>ABC transporter ABCC.12</shortName>
        <shortName>AtABCC12</shortName>
        <ecNumber>7.6.2.2</ecNumber>
    </recommendedName>
    <alternativeName>
        <fullName>ATP-energized glutathione S-conjugate pump 13</fullName>
    </alternativeName>
    <alternativeName>
        <fullName>Glutathione S-conjugate-transporting ATPase 13</fullName>
    </alternativeName>
    <alternativeName>
        <fullName>Multidrug resistance-associated protein 13</fullName>
    </alternativeName>
</protein>
<gene>
    <name type="primary">ABCC12</name>
    <name type="synonym">MRP12</name>
    <name type="synonym">MRP13</name>
    <name type="ordered locus">At1g30410</name>
    <name type="ORF">T4K22.13</name>
</gene>
<name>AB12C_ARATH</name>
<keyword id="KW-0067">ATP-binding</keyword>
<keyword id="KW-0472">Membrane</keyword>
<keyword id="KW-0547">Nucleotide-binding</keyword>
<keyword id="KW-1185">Reference proteome</keyword>
<keyword id="KW-0677">Repeat</keyword>
<keyword id="KW-1278">Translocase</keyword>
<keyword id="KW-0812">Transmembrane</keyword>
<keyword id="KW-1133">Transmembrane helix</keyword>
<keyword id="KW-0813">Transport</keyword>
<sequence length="1495" mass="167956">MGFEALNWYCKPVADGFWEKAVDGAFGAYTPCAIDSLVMLVSHFVLLGLCFYRIWIIFHNTKAQIYVLRKKYYNCVLGLLACYCVVEPVLRLVMGISLFDMDEETDFPPFEVASLMVEAFAWFSMLVLIGLETKQYVKEFRWYVRFGVLYVLVADAVLLDLVLPLKNSINRTALYLFISSRCSQALFGILLLIYIPELDPYPGYHIVNNEPLDNVEYDALRGGEHICPERHASIFSRIYFGWITPLMQLGYRKPITEKDVWQLDKWDQTETLIKRFQRCWTEESRRPKPWLLRALNNSLGGRFWLAGIFKIGNDLSQFVGPVILSHLLRSMQEGDPAWVGYVYAFIIFVGVTLGVLCEAQYFQNVWRVGFRLRSTLVAAIFHKSLRLTHEARKNFASGKVTNMITTDANALQQISQQLHGLWSAPFRIIVSMILLYQQLGVASLFGSLILFLLIPLQTLIISKMRKLTKEGLQWTDKRVGITNEILSSMDTVKCYAWEKSFESRIQGIRNEELSWFRKAQLLSAFNSFILNSIPVVVTVVSFGVFVLLGGDLTPARAFTSLSLFAVLRFPLNMLPNLLSQVVNANVSLQRIEELLLSEERILAQNPPLQPGTPAISIKNGYFSWDSKTTKPTLSDINLEIPVGTLVAIVGGTGEGKTSLISAMLGELSHAETTSVVIRGSVAYVPQVSWIFNATVRENILFGSDFESERYWRAIDATALQHDLDLLPGRDLTEIGERGVNISGGQKQRVSMARAVYSNSDVYIFDDPLSALDAHVAHQVFDSCMKDELRGKTRVLVTNQLHFLPLMDKIILVSEGMIKEEGTFVELSKSGILFKKLMENAGKMDATQEVNTNDENILKLGPTVTVDVSERNLGSTKQGKRRRSVLIKQEERETGIISWNVLMRYKEAVGGLWVVMILLACYLATEVLRVSSSTWLSIWTDQSTSKNYSPGFYIVVYALLGFGQVAVTFTNSFWLITSSLHAARRLHDAMLSSILRAPMLFFHTNPTGRVINRFSKDIGDIDRNVANLMNMFMNQLWQLLSTFALIGTVSTISLWAIMPLLILFYAAYLYYQSTSREVRRLDSVTRSPIYAQFGEALNGLSSIRAYKAYDRMAKINGKSMDNNIRFTLANTSSNRWLTIRLETLGGVMIWLTATFAVLQNGNTNNQAGFASTMGLLLSYTLNITSLLSGVLRQASRAENSLNSVERVGNYIDLPSEATDIIENNRPVCGWPSGGSIKFEDVHLRYRPGLPPVLHGLTFFVSPSEKVGVVGRTGAGKSSMLNALFRIVEVEKGRIMIDDCDVAKFGLTDVRRVLSIIPQSPVLFSGTVRFNIDPFSEHNDAGLWEALHRAHIKDVISRNPFGLDAEVCEGGENFSVGQRQLLSLARALLRRSKILVLDEATASVDVRTDSLIQRTIREEFKSCTMLVIAHRLNTIIDCDKILVLSSGQVLEYDSPQELLSRDTSAFFRMVHSTGPANAQYLSNLVFERRENGMSVGG</sequence>
<evidence type="ECO:0000250" key="1"/>
<evidence type="ECO:0000255" key="2">
    <source>
        <dbReference type="PROSITE-ProRule" id="PRU00434"/>
    </source>
</evidence>
<evidence type="ECO:0000255" key="3">
    <source>
        <dbReference type="PROSITE-ProRule" id="PRU00441"/>
    </source>
</evidence>
<evidence type="ECO:0000269" key="4">
    <source>
    </source>
</evidence>
<evidence type="ECO:0000305" key="5"/>
<proteinExistence type="evidence at transcript level"/>
<organism>
    <name type="scientific">Arabidopsis thaliana</name>
    <name type="common">Mouse-ear cress</name>
    <dbReference type="NCBI Taxonomy" id="3702"/>
    <lineage>
        <taxon>Eukaryota</taxon>
        <taxon>Viridiplantae</taxon>
        <taxon>Streptophyta</taxon>
        <taxon>Embryophyta</taxon>
        <taxon>Tracheophyta</taxon>
        <taxon>Spermatophyta</taxon>
        <taxon>Magnoliopsida</taxon>
        <taxon>eudicotyledons</taxon>
        <taxon>Gunneridae</taxon>
        <taxon>Pentapetalae</taxon>
        <taxon>rosids</taxon>
        <taxon>malvids</taxon>
        <taxon>Brassicales</taxon>
        <taxon>Brassicaceae</taxon>
        <taxon>Camelineae</taxon>
        <taxon>Arabidopsis</taxon>
    </lineage>
</organism>